<name>RDXA_HELPY</name>
<proteinExistence type="evidence at protein level"/>
<organism>
    <name type="scientific">Helicobacter pylori (strain ATCC 700392 / 26695)</name>
    <name type="common">Campylobacter pylori</name>
    <dbReference type="NCBI Taxonomy" id="85962"/>
    <lineage>
        <taxon>Bacteria</taxon>
        <taxon>Pseudomonadati</taxon>
        <taxon>Campylobacterota</taxon>
        <taxon>Epsilonproteobacteria</taxon>
        <taxon>Campylobacterales</taxon>
        <taxon>Helicobacteraceae</taxon>
        <taxon>Helicobacter</taxon>
    </lineage>
</organism>
<sequence>MKFLDQEKRRQLLNERHSCKMFDSHYEFSSTELEEIAEIARLSPSSYNTQPWHFVMVTDKDLKKQIAAHSYFNEEMIKSASALMVVCSLRPSELLPHGHYMQNLYPESYKVRVIPSFAQMLGVRFNHSMQRLESYILEQCYIAVGQICMGVSLMGLDSCIIGGFDPLKVGEVLEERINKPKIACLIALGKRVAEASQKSRKSKVDAITWL</sequence>
<reference key="1">
    <citation type="journal article" date="1998" name="Mol. Microbiol.">
        <title>Metronidazole resistance in Helicobacter pylori is due to null mutations in a gene (rdxA) that encodes an oxygen-insensitive NADPH nitroreductase.</title>
        <authorList>
            <person name="Goodwin A."/>
            <person name="Kersulyte D."/>
            <person name="Sisson G."/>
            <person name="Veldhuyzen van Zanten S.J.O."/>
            <person name="Berg D.E."/>
            <person name="Hoffman P.S."/>
        </authorList>
    </citation>
    <scope>NUCLEOTIDE SEQUENCE [GENOMIC DNA]</scope>
    <scope>FUNCTION AS A NITROREDUCTASE</scope>
    <scope>EFFECT ON METRONIDAZOLE RESISTANCE</scope>
    <source>
        <strain>HP500</strain>
    </source>
</reference>
<reference key="2">
    <citation type="journal article" date="2001" name="Antimicrob. Agents Chemother.">
        <title>Mutations of the Helicobacter pylori genes rdxA and pbp1 cause resistance against metronidazole and amoxicillin.</title>
        <authorList>
            <person name="Paul R."/>
            <person name="Postius S."/>
            <person name="Melchers K."/>
            <person name="Schafer K.P."/>
        </authorList>
    </citation>
    <scope>NUCLEOTIDE SEQUENCE [GENOMIC DNA]</scope>
    <scope>VARIANTS RESISTANT TO METRONIDAZOLE</scope>
    <scope>MUTAGENESIS OF CYS-19 AND THR-49</scope>
    <source>
        <strain>69A</strain>
        <strain>ATCC 43504 / NCTC 11637 / JCM 7653 / RPH 13487</strain>
        <strain>ATCC 49503 / 60190</strain>
    </source>
</reference>
<reference key="3">
    <citation type="journal article" date="1997" name="Nature">
        <title>The complete genome sequence of the gastric pathogen Helicobacter pylori.</title>
        <authorList>
            <person name="Tomb J.-F."/>
            <person name="White O."/>
            <person name="Kerlavage A.R."/>
            <person name="Clayton R.A."/>
            <person name="Sutton G.G."/>
            <person name="Fleischmann R.D."/>
            <person name="Ketchum K.A."/>
            <person name="Klenk H.-P."/>
            <person name="Gill S.R."/>
            <person name="Dougherty B.A."/>
            <person name="Nelson K.E."/>
            <person name="Quackenbush J."/>
            <person name="Zhou L."/>
            <person name="Kirkness E.F."/>
            <person name="Peterson S.N."/>
            <person name="Loftus B.J."/>
            <person name="Richardson D.L."/>
            <person name="Dodson R.J."/>
            <person name="Khalak H.G."/>
            <person name="Glodek A."/>
            <person name="McKenney K."/>
            <person name="FitzGerald L.M."/>
            <person name="Lee N."/>
            <person name="Adams M.D."/>
            <person name="Hickey E.K."/>
            <person name="Berg D.E."/>
            <person name="Gocayne J.D."/>
            <person name="Utterback T.R."/>
            <person name="Peterson J.D."/>
            <person name="Kelley J.M."/>
            <person name="Cotton M.D."/>
            <person name="Weidman J.F."/>
            <person name="Fujii C."/>
            <person name="Bowman C."/>
            <person name="Watthey L."/>
            <person name="Wallin E."/>
            <person name="Hayes W.S."/>
            <person name="Borodovsky M."/>
            <person name="Karp P.D."/>
            <person name="Smith H.O."/>
            <person name="Fraser C.M."/>
            <person name="Venter J.C."/>
        </authorList>
    </citation>
    <scope>NUCLEOTIDE SEQUENCE [LARGE SCALE GENOMIC DNA]</scope>
    <source>
        <strain>ATCC 700392 / 26695</strain>
    </source>
</reference>
<reference key="4">
    <citation type="journal article" date="1999" name="Antimicrob. Agents Chemother.">
        <title>Insertion of mini-IS605 and deletion of adjacent sequences in the nitroreductase (rdxA) gene cause metronidazole resistance in Helicobacter pylori NCTC11637.</title>
        <authorList>
            <person name="Debets-Ossenkopp Y.J."/>
            <person name="Pot R.G.J."/>
            <person name="van Westerloo D.J."/>
            <person name="Goodwin A."/>
            <person name="Vandenbroucke-Grauls C.M.J.E."/>
            <person name="Berg D.E."/>
            <person name="Hoffman P.S."/>
            <person name="Kusters J.G."/>
        </authorList>
    </citation>
    <scope>INVOLVEMENT IN RESISTANCE TO METRONIDAZOLE</scope>
    <source>
        <strain>ATCC 43504 / NCTC 11637 / JCM 7653 / RPH 13487</strain>
    </source>
</reference>
<protein>
    <recommendedName>
        <fullName>Oxygen-insensitive NADPH nitroreductase</fullName>
        <ecNumber>1.-.-.-</ecNumber>
    </recommendedName>
</protein>
<feature type="chain" id="PRO_0000321864" description="Oxygen-insensitive NADPH nitroreductase">
    <location>
        <begin position="1"/>
        <end position="210"/>
    </location>
</feature>
<feature type="binding site" evidence="1">
    <location>
        <begin position="150"/>
        <end position="155"/>
    </location>
    <ligand>
        <name>NADP(+)</name>
        <dbReference type="ChEBI" id="CHEBI:58349"/>
    </ligand>
</feature>
<feature type="sequence variant" description="In strain: ATCC 43504 / NCTC 11637 / JCM 7653 / RPH 13487; resistant to metronidazole.">
    <original>N</original>
    <variation>K</variation>
    <location>
        <position position="14"/>
    </location>
</feature>
<feature type="sequence variant" description="In strain: HP500, 69A and ATCC 43504 / NCTC 11637 / JCM 7653 / RPH 13487; resistant to metronidazole.">
    <original>T</original>
    <variation>E</variation>
    <location>
        <position position="31"/>
    </location>
</feature>
<feature type="sequence variant" description="In strain: ATCC 43504 / NCTC 11637 / JCM 7653 / RPH 13487; resistant to metronidazole.">
    <original>I</original>
    <variation>V</variation>
    <location>
        <position position="36"/>
    </location>
</feature>
<feature type="sequence variant" description="In strain: ATCC 49503.">
    <original>H</original>
    <variation>R</variation>
    <location>
        <position position="53"/>
    </location>
</feature>
<feature type="sequence variant" description="In strain: ATCC 43504 / NCTC 11637 / JCM 7653 / RPH 13487; resistant to metronidazole.">
    <original>M</original>
    <variation>I</variation>
    <location>
        <position position="56"/>
    </location>
</feature>
<feature type="sequence variant" description="In strain: HP500, 69A, ATCC 43504 / NCTC 11637 / JCM 7653 / RPH 13487; resistant to metronidazole and ATCC 49503 / 60190.">
    <original>D</original>
    <variation>N</variation>
    <location>
        <position position="59"/>
    </location>
</feature>
<feature type="sequence variant" description="In strain: ATCC 43504 / NCTC 11637 / JCM 7653 / RPH 13487; resistant to metronidazole.">
    <original>KKQIAAHSYFNEEMIKSASALMVVCSLRPSE</original>
    <variation>NHPSRNPKH</variation>
    <location>
        <begin position="63"/>
        <end position="93"/>
    </location>
</feature>
<feature type="sequence variant" description="In strain: 69A.">
    <original>K</original>
    <variation>N</variation>
    <location>
        <position position="64"/>
    </location>
</feature>
<feature type="sequence variant" description="In strain: HP500.">
    <original>A</original>
    <variation>V</variation>
    <location>
        <position position="68"/>
    </location>
</feature>
<feature type="sequence variant" description="In strain: ATCC 49503 / 60190.">
    <original>R</original>
    <variation>K</variation>
    <location>
        <position position="90"/>
    </location>
</feature>
<feature type="sequence variant" description="In strain: 69A.">
    <original>H</original>
    <variation>T</variation>
    <location>
        <position position="97"/>
    </location>
</feature>
<feature type="sequence variant" description="In strain: ATCC 49503 / 60190.">
    <original>G</original>
    <variation>S</variation>
    <location>
        <position position="98"/>
    </location>
</feature>
<feature type="sequence variant" description="In strain: 69A.">
    <original>P</original>
    <variation>S</variation>
    <location>
        <position position="106"/>
    </location>
</feature>
<feature type="sequence variant" description="In strain: 69A.">
    <original>R</original>
    <variation>K</variation>
    <location>
        <position position="131"/>
    </location>
</feature>
<feature type="sequence variant" description="In strain: 69A.">
    <original>V</original>
    <variation>I</variation>
    <location>
        <position position="172"/>
    </location>
</feature>
<feature type="sequence variant" description="In strain: ATCC 49503 / 60190.">
    <original>A</original>
    <variation>V</variation>
    <location>
        <position position="183"/>
    </location>
</feature>
<feature type="mutagenesis site" description="Loss of function and acquisition of resistance to metronidazole." evidence="2">
    <original>C</original>
    <variation>Y</variation>
    <location>
        <position position="19"/>
    </location>
</feature>
<feature type="mutagenesis site" description="Loss of function and acquisition of resistance to metronidazole." evidence="2">
    <original>T</original>
    <variation>K</variation>
    <location>
        <position position="49"/>
    </location>
</feature>
<feature type="helix" evidence="5">
    <location>
        <begin position="6"/>
        <end position="15"/>
    </location>
</feature>
<feature type="helix" evidence="5">
    <location>
        <begin position="30"/>
        <end position="41"/>
    </location>
</feature>
<feature type="helix" evidence="5">
    <location>
        <begin position="46"/>
        <end position="48"/>
    </location>
</feature>
<feature type="strand" evidence="5">
    <location>
        <begin position="52"/>
        <end position="57"/>
    </location>
</feature>
<feature type="helix" evidence="5">
    <location>
        <begin position="60"/>
        <end position="67"/>
    </location>
</feature>
<feature type="helix" evidence="5">
    <location>
        <begin position="71"/>
        <end position="73"/>
    </location>
</feature>
<feature type="helix" evidence="5">
    <location>
        <begin position="74"/>
        <end position="79"/>
    </location>
</feature>
<feature type="strand" evidence="5">
    <location>
        <begin position="81"/>
        <end position="88"/>
    </location>
</feature>
<feature type="helix" evidence="5">
    <location>
        <begin position="91"/>
        <end position="94"/>
    </location>
</feature>
<feature type="helix" evidence="5">
    <location>
        <begin position="131"/>
        <end position="154"/>
    </location>
</feature>
<feature type="strand" evidence="5">
    <location>
        <begin position="157"/>
        <end position="161"/>
    </location>
</feature>
<feature type="helix" evidence="5">
    <location>
        <begin position="166"/>
        <end position="171"/>
    </location>
</feature>
<feature type="turn" evidence="5">
    <location>
        <begin position="172"/>
        <end position="176"/>
    </location>
</feature>
<feature type="strand" evidence="5">
    <location>
        <begin position="181"/>
        <end position="189"/>
    </location>
</feature>
<feature type="strand" evidence="5">
    <location>
        <begin position="191"/>
        <end position="193"/>
    </location>
</feature>
<feature type="helix" evidence="5">
    <location>
        <begin position="203"/>
        <end position="206"/>
    </location>
</feature>
<feature type="strand" evidence="5">
    <location>
        <begin position="207"/>
        <end position="210"/>
    </location>
</feature>
<gene>
    <name type="primary">rdxA</name>
    <name type="ordered locus">HP_0954</name>
</gene>
<evidence type="ECO:0000250" key="1"/>
<evidence type="ECO:0000269" key="2">
    <source>
    </source>
</evidence>
<evidence type="ECO:0000269" key="3">
    <source>
    </source>
</evidence>
<evidence type="ECO:0000305" key="4"/>
<evidence type="ECO:0007829" key="5">
    <source>
        <dbReference type="PDB" id="3QDL"/>
    </source>
</evidence>
<comment type="function">
    <text evidence="1 3">Reduction of a variety of nitroaromatic compounds using NADPH as source of reducing equivalents; two electrons are transferred (By similarity). Capable of reducing metronidazole; inactive RdxA renders the bacterium resistant to this compound. The reduction of metronidazole generates hydroxylamine, a potent mutagen and bactericide.</text>
</comment>
<comment type="similarity">
    <text evidence="4">Belongs to the nitroreductase family.</text>
</comment>
<keyword id="KW-0002">3D-structure</keyword>
<keyword id="KW-0046">Antibiotic resistance</keyword>
<keyword id="KW-0521">NADP</keyword>
<keyword id="KW-0560">Oxidoreductase</keyword>
<keyword id="KW-1185">Reference proteome</keyword>
<accession>O25608</accession>
<accession>O30585</accession>
<accession>Q9AHD6</accession>
<accession>Q9AHF7</accession>
<accession>Q9AHF8</accession>
<dbReference type="EC" id="1.-.-.-"/>
<dbReference type="EMBL" id="AF012552">
    <property type="protein sequence ID" value="AAC46349.1"/>
    <property type="molecule type" value="Genomic_DNA"/>
</dbReference>
<dbReference type="EMBL" id="AF315501">
    <property type="protein sequence ID" value="AAK17124.1"/>
    <property type="molecule type" value="Genomic_DNA"/>
</dbReference>
<dbReference type="EMBL" id="AF315502">
    <property type="protein sequence ID" value="AAK17125.1"/>
    <property type="molecule type" value="Genomic_DNA"/>
</dbReference>
<dbReference type="EMBL" id="AF316109">
    <property type="protein sequence ID" value="AAK19260.1"/>
    <property type="molecule type" value="Genomic_DNA"/>
</dbReference>
<dbReference type="EMBL" id="AE000511">
    <property type="protein sequence ID" value="AAD07997.1"/>
    <property type="molecule type" value="Genomic_DNA"/>
</dbReference>
<dbReference type="PIR" id="B64639">
    <property type="entry name" value="B64639"/>
</dbReference>
<dbReference type="RefSeq" id="NP_207746.1">
    <property type="nucleotide sequence ID" value="NC_000915.1"/>
</dbReference>
<dbReference type="RefSeq" id="WP_000670110.1">
    <property type="nucleotide sequence ID" value="NC_018939.1"/>
</dbReference>
<dbReference type="PDB" id="3QDL">
    <property type="method" value="X-ray"/>
    <property type="resolution" value="2.00 A"/>
    <property type="chains" value="A/B/C/D=1-210"/>
</dbReference>
<dbReference type="PDBsum" id="3QDL"/>
<dbReference type="SMR" id="O25608"/>
<dbReference type="DIP" id="DIP-3602N"/>
<dbReference type="FunCoup" id="O25608">
    <property type="interactions" value="78"/>
</dbReference>
<dbReference type="IntAct" id="O25608">
    <property type="interactions" value="2"/>
</dbReference>
<dbReference type="MINT" id="O25608"/>
<dbReference type="STRING" id="85962.HP_0954"/>
<dbReference type="DrugBank" id="DB00916">
    <property type="generic name" value="Metronidazole"/>
</dbReference>
<dbReference type="PaxDb" id="85962-C694_04915"/>
<dbReference type="EnsemblBacteria" id="AAD07997">
    <property type="protein sequence ID" value="AAD07997"/>
    <property type="gene ID" value="HP_0954"/>
</dbReference>
<dbReference type="KEGG" id="heo:C694_04915"/>
<dbReference type="KEGG" id="hpy:HP_0954"/>
<dbReference type="PATRIC" id="fig|85962.47.peg.1022"/>
<dbReference type="eggNOG" id="COG0778">
    <property type="taxonomic scope" value="Bacteria"/>
</dbReference>
<dbReference type="InParanoid" id="O25608"/>
<dbReference type="OrthoDB" id="9809288at2"/>
<dbReference type="PhylomeDB" id="O25608"/>
<dbReference type="BioCyc" id="MetaCyc:HP_RS04670-MONOMER"/>
<dbReference type="EvolutionaryTrace" id="O25608"/>
<dbReference type="Proteomes" id="UP000000429">
    <property type="component" value="Chromosome"/>
</dbReference>
<dbReference type="GO" id="GO:0016491">
    <property type="term" value="F:oxidoreductase activity"/>
    <property type="evidence" value="ECO:0007669"/>
    <property type="project" value="UniProtKB-KW"/>
</dbReference>
<dbReference type="GO" id="GO:0046677">
    <property type="term" value="P:response to antibiotic"/>
    <property type="evidence" value="ECO:0007669"/>
    <property type="project" value="UniProtKB-KW"/>
</dbReference>
<dbReference type="CDD" id="cd02149">
    <property type="entry name" value="NfsB-like"/>
    <property type="match status" value="1"/>
</dbReference>
<dbReference type="Gene3D" id="3.40.109.10">
    <property type="entry name" value="NADH Oxidase"/>
    <property type="match status" value="1"/>
</dbReference>
<dbReference type="InterPro" id="IPR033878">
    <property type="entry name" value="NfsB-like"/>
</dbReference>
<dbReference type="InterPro" id="IPR029479">
    <property type="entry name" value="Nitroreductase"/>
</dbReference>
<dbReference type="InterPro" id="IPR000415">
    <property type="entry name" value="Nitroreductase-like"/>
</dbReference>
<dbReference type="PANTHER" id="PTHR43673">
    <property type="entry name" value="NAD(P)H NITROREDUCTASE YDGI-RELATED"/>
    <property type="match status" value="1"/>
</dbReference>
<dbReference type="PANTHER" id="PTHR43673:SF10">
    <property type="entry name" value="NADH DEHYDROGENASE_NAD(P)H NITROREDUCTASE XCC3605-RELATED"/>
    <property type="match status" value="1"/>
</dbReference>
<dbReference type="Pfam" id="PF00881">
    <property type="entry name" value="Nitroreductase"/>
    <property type="match status" value="1"/>
</dbReference>
<dbReference type="SUPFAM" id="SSF55469">
    <property type="entry name" value="FMN-dependent nitroreductase-like"/>
    <property type="match status" value="1"/>
</dbReference>